<evidence type="ECO:0000255" key="1">
    <source>
        <dbReference type="HAMAP-Rule" id="MF_00167"/>
    </source>
</evidence>
<organism>
    <name type="scientific">Chromohalobacter salexigens (strain ATCC BAA-138 / DSM 3043 / CIP 106854 / NCIMB 13768 / 1H11)</name>
    <dbReference type="NCBI Taxonomy" id="290398"/>
    <lineage>
        <taxon>Bacteria</taxon>
        <taxon>Pseudomonadati</taxon>
        <taxon>Pseudomonadota</taxon>
        <taxon>Gammaproteobacteria</taxon>
        <taxon>Oceanospirillales</taxon>
        <taxon>Halomonadaceae</taxon>
        <taxon>Chromohalobacter</taxon>
    </lineage>
</organism>
<dbReference type="EMBL" id="CP000285">
    <property type="protein sequence ID" value="ABE57989.1"/>
    <property type="molecule type" value="Genomic_DNA"/>
</dbReference>
<dbReference type="RefSeq" id="WP_011505935.1">
    <property type="nucleotide sequence ID" value="NC_007963.1"/>
</dbReference>
<dbReference type="SMR" id="Q1QZW9"/>
<dbReference type="STRING" id="290398.Csal_0627"/>
<dbReference type="GeneID" id="95333382"/>
<dbReference type="KEGG" id="csa:Csal_0627"/>
<dbReference type="eggNOG" id="COG1551">
    <property type="taxonomic scope" value="Bacteria"/>
</dbReference>
<dbReference type="HOGENOM" id="CLU_164837_2_2_6"/>
<dbReference type="OrthoDB" id="9809061at2"/>
<dbReference type="Proteomes" id="UP000000239">
    <property type="component" value="Chromosome"/>
</dbReference>
<dbReference type="GO" id="GO:0005829">
    <property type="term" value="C:cytosol"/>
    <property type="evidence" value="ECO:0007669"/>
    <property type="project" value="TreeGrafter"/>
</dbReference>
<dbReference type="GO" id="GO:0048027">
    <property type="term" value="F:mRNA 5'-UTR binding"/>
    <property type="evidence" value="ECO:0007669"/>
    <property type="project" value="UniProtKB-UniRule"/>
</dbReference>
<dbReference type="GO" id="GO:0006402">
    <property type="term" value="P:mRNA catabolic process"/>
    <property type="evidence" value="ECO:0007669"/>
    <property type="project" value="InterPro"/>
</dbReference>
<dbReference type="GO" id="GO:0045947">
    <property type="term" value="P:negative regulation of translational initiation"/>
    <property type="evidence" value="ECO:0007669"/>
    <property type="project" value="UniProtKB-UniRule"/>
</dbReference>
<dbReference type="GO" id="GO:0045948">
    <property type="term" value="P:positive regulation of translational initiation"/>
    <property type="evidence" value="ECO:0007669"/>
    <property type="project" value="UniProtKB-UniRule"/>
</dbReference>
<dbReference type="GO" id="GO:0006109">
    <property type="term" value="P:regulation of carbohydrate metabolic process"/>
    <property type="evidence" value="ECO:0007669"/>
    <property type="project" value="UniProtKB-UniRule"/>
</dbReference>
<dbReference type="FunFam" id="2.60.40.4380:FF:000001">
    <property type="entry name" value="Translational regulator CsrA"/>
    <property type="match status" value="1"/>
</dbReference>
<dbReference type="Gene3D" id="2.60.40.4380">
    <property type="entry name" value="Translational regulator CsrA"/>
    <property type="match status" value="1"/>
</dbReference>
<dbReference type="HAMAP" id="MF_00167">
    <property type="entry name" value="CsrA"/>
    <property type="match status" value="1"/>
</dbReference>
<dbReference type="InterPro" id="IPR003751">
    <property type="entry name" value="CsrA"/>
</dbReference>
<dbReference type="InterPro" id="IPR036107">
    <property type="entry name" value="CsrA_sf"/>
</dbReference>
<dbReference type="NCBIfam" id="TIGR00202">
    <property type="entry name" value="csrA"/>
    <property type="match status" value="1"/>
</dbReference>
<dbReference type="NCBIfam" id="NF002469">
    <property type="entry name" value="PRK01712.1"/>
    <property type="match status" value="1"/>
</dbReference>
<dbReference type="PANTHER" id="PTHR34984">
    <property type="entry name" value="CARBON STORAGE REGULATOR"/>
    <property type="match status" value="1"/>
</dbReference>
<dbReference type="PANTHER" id="PTHR34984:SF1">
    <property type="entry name" value="CARBON STORAGE REGULATOR"/>
    <property type="match status" value="1"/>
</dbReference>
<dbReference type="Pfam" id="PF02599">
    <property type="entry name" value="CsrA"/>
    <property type="match status" value="1"/>
</dbReference>
<dbReference type="SUPFAM" id="SSF117130">
    <property type="entry name" value="CsrA-like"/>
    <property type="match status" value="1"/>
</dbReference>
<protein>
    <recommendedName>
        <fullName evidence="1">Translational regulator CsrA</fullName>
    </recommendedName>
    <alternativeName>
        <fullName evidence="1">Carbon storage regulator</fullName>
    </alternativeName>
</protein>
<comment type="function">
    <text evidence="1">A key translational regulator that binds mRNA to regulate translation initiation and/or mRNA stability. Mediates global changes in gene expression, shifting from rapid growth to stress survival by linking envelope stress, the stringent response and the catabolite repression systems. Usually binds in the 5'-UTR; binding at or near the Shine-Dalgarno sequence prevents ribosome-binding, repressing translation, binding elsewhere in the 5'-UTR can activate translation and/or stabilize the mRNA. Its function is antagonized by small RNA(s).</text>
</comment>
<comment type="subunit">
    <text evidence="1">Homodimer; the beta-strands of each monomer intercalate to form a hydrophobic core, while the alpha-helices form wings that extend away from the core.</text>
</comment>
<comment type="subcellular location">
    <subcellularLocation>
        <location evidence="1">Cytoplasm</location>
    </subcellularLocation>
</comment>
<comment type="similarity">
    <text evidence="1">Belongs to the CsrA/RsmA family.</text>
</comment>
<name>CSRA_CHRSD</name>
<sequence>MLILTRRVGETLMIGDDITVTVLGVKGNQVRIGVNAPKDVAVHREEIYQRIQREKTDSEDDGSSV</sequence>
<gene>
    <name evidence="1" type="primary">csrA</name>
    <name type="ordered locus">Csal_0627</name>
</gene>
<keyword id="KW-0010">Activator</keyword>
<keyword id="KW-0963">Cytoplasm</keyword>
<keyword id="KW-1185">Reference proteome</keyword>
<keyword id="KW-0678">Repressor</keyword>
<keyword id="KW-0694">RNA-binding</keyword>
<keyword id="KW-0810">Translation regulation</keyword>
<accession>Q1QZW9</accession>
<proteinExistence type="inferred from homology"/>
<reference key="1">
    <citation type="journal article" date="2011" name="Stand. Genomic Sci.">
        <title>Complete genome sequence of the halophilic and highly halotolerant Chromohalobacter salexigens type strain (1H11(T)).</title>
        <authorList>
            <person name="Copeland A."/>
            <person name="O'Connor K."/>
            <person name="Lucas S."/>
            <person name="Lapidus A."/>
            <person name="Berry K.W."/>
            <person name="Detter J.C."/>
            <person name="Del Rio T.G."/>
            <person name="Hammon N."/>
            <person name="Dalin E."/>
            <person name="Tice H."/>
            <person name="Pitluck S."/>
            <person name="Bruce D."/>
            <person name="Goodwin L."/>
            <person name="Han C."/>
            <person name="Tapia R."/>
            <person name="Saunders E."/>
            <person name="Schmutz J."/>
            <person name="Brettin T."/>
            <person name="Larimer F."/>
            <person name="Land M."/>
            <person name="Hauser L."/>
            <person name="Vargas C."/>
            <person name="Nieto J.J."/>
            <person name="Kyrpides N.C."/>
            <person name="Ivanova N."/>
            <person name="Goker M."/>
            <person name="Klenk H.P."/>
            <person name="Csonka L.N."/>
            <person name="Woyke T."/>
        </authorList>
    </citation>
    <scope>NUCLEOTIDE SEQUENCE [LARGE SCALE GENOMIC DNA]</scope>
    <source>
        <strain>ATCC BAA-138 / DSM 3043 / CIP 106854 / NCIMB 13768 / 1H11</strain>
    </source>
</reference>
<feature type="chain" id="PRO_1000023367" description="Translational regulator CsrA">
    <location>
        <begin position="1"/>
        <end position="65"/>
    </location>
</feature>